<proteinExistence type="evidence at protein level"/>
<comment type="subcellular location">
    <subcellularLocation>
        <location evidence="1">Plastid</location>
        <location evidence="1">Chloroplast thylakoid</location>
    </subcellularLocation>
</comment>
<comment type="miscellaneous">
    <text evidence="1">On the 2D-gel the determined pI of this protein is: 5.8, its MW is: 45.8 kDa.</text>
</comment>
<sequence length="11" mass="1257">XAEIEAEQNIE</sequence>
<protein>
    <recommendedName>
        <fullName>Unknown protein from spot 125 of 2D-PAGE of thylakoid</fullName>
    </recommendedName>
</protein>
<organism>
    <name type="scientific">Pisum sativum</name>
    <name type="common">Garden pea</name>
    <name type="synonym">Lathyrus oleraceus</name>
    <dbReference type="NCBI Taxonomy" id="3888"/>
    <lineage>
        <taxon>Eukaryota</taxon>
        <taxon>Viridiplantae</taxon>
        <taxon>Streptophyta</taxon>
        <taxon>Embryophyta</taxon>
        <taxon>Tracheophyta</taxon>
        <taxon>Spermatophyta</taxon>
        <taxon>Magnoliopsida</taxon>
        <taxon>eudicotyledons</taxon>
        <taxon>Gunneridae</taxon>
        <taxon>Pentapetalae</taxon>
        <taxon>rosids</taxon>
        <taxon>fabids</taxon>
        <taxon>Fabales</taxon>
        <taxon>Fabaceae</taxon>
        <taxon>Papilionoideae</taxon>
        <taxon>50 kb inversion clade</taxon>
        <taxon>NPAAA clade</taxon>
        <taxon>Hologalegina</taxon>
        <taxon>IRL clade</taxon>
        <taxon>Fabeae</taxon>
        <taxon>Pisum</taxon>
    </lineage>
</organism>
<feature type="chain" id="PRO_0000234480" description="Unknown protein from spot 125 of 2D-PAGE of thylakoid">
    <location>
        <begin position="1"/>
        <end position="11" status="greater than"/>
    </location>
</feature>
<feature type="non-terminal residue" evidence="2">
    <location>
        <position position="11"/>
    </location>
</feature>
<name>UT125_PEA</name>
<keyword id="KW-0150">Chloroplast</keyword>
<keyword id="KW-0903">Direct protein sequencing</keyword>
<keyword id="KW-0934">Plastid</keyword>
<keyword id="KW-0793">Thylakoid</keyword>
<reference evidence="3" key="1">
    <citation type="journal article" date="2000" name="Plant Cell">
        <title>Proteomics of the chloroplast: systematic identification and targeting analysis of lumenal and peripheral thylakoid proteins.</title>
        <authorList>
            <person name="Peltier J.-B."/>
            <person name="Friso G."/>
            <person name="Kalume D.E."/>
            <person name="Roepstorff P."/>
            <person name="Nilsson F."/>
            <person name="Adamska I."/>
            <person name="van Wijk K.J."/>
        </authorList>
    </citation>
    <scope>PROTEIN SEQUENCE</scope>
    <scope>SUBCELLULAR LOCATION</scope>
    <source>
        <strain evidence="1">cv. De Grace</strain>
        <tissue evidence="1">Leaf</tissue>
    </source>
</reference>
<evidence type="ECO:0000269" key="1">
    <source>
    </source>
</evidence>
<evidence type="ECO:0000303" key="2">
    <source>
    </source>
</evidence>
<evidence type="ECO:0000305" key="3"/>
<dbReference type="GO" id="GO:0009534">
    <property type="term" value="C:chloroplast thylakoid"/>
    <property type="evidence" value="ECO:0007669"/>
    <property type="project" value="UniProtKB-SubCell"/>
</dbReference>
<accession>P82336</accession>